<organism>
    <name type="scientific">Escherichia coli O6:K15:H31 (strain 536 / UPEC)</name>
    <dbReference type="NCBI Taxonomy" id="362663"/>
    <lineage>
        <taxon>Bacteria</taxon>
        <taxon>Pseudomonadati</taxon>
        <taxon>Pseudomonadota</taxon>
        <taxon>Gammaproteobacteria</taxon>
        <taxon>Enterobacterales</taxon>
        <taxon>Enterobacteriaceae</taxon>
        <taxon>Escherichia</taxon>
    </lineage>
</organism>
<feature type="chain" id="PRO_0000330511" description="Siroheme synthase">
    <location>
        <begin position="1"/>
        <end position="457"/>
    </location>
</feature>
<feature type="region of interest" description="Precorrin-2 dehydrogenase /sirohydrochlorin ferrochelatase" evidence="1">
    <location>
        <begin position="1"/>
        <end position="204"/>
    </location>
</feature>
<feature type="region of interest" description="Uroporphyrinogen-III C-methyltransferase" evidence="1">
    <location>
        <begin position="216"/>
        <end position="457"/>
    </location>
</feature>
<feature type="active site" description="Proton acceptor" evidence="1">
    <location>
        <position position="248"/>
    </location>
</feature>
<feature type="active site" description="Proton donor" evidence="1">
    <location>
        <position position="270"/>
    </location>
</feature>
<feature type="binding site" evidence="1">
    <location>
        <begin position="22"/>
        <end position="23"/>
    </location>
    <ligand>
        <name>NAD(+)</name>
        <dbReference type="ChEBI" id="CHEBI:57540"/>
    </ligand>
</feature>
<feature type="binding site" evidence="1">
    <location>
        <begin position="43"/>
        <end position="44"/>
    </location>
    <ligand>
        <name>NAD(+)</name>
        <dbReference type="ChEBI" id="CHEBI:57540"/>
    </ligand>
</feature>
<feature type="binding site" evidence="1">
    <location>
        <position position="225"/>
    </location>
    <ligand>
        <name>S-adenosyl-L-methionine</name>
        <dbReference type="ChEBI" id="CHEBI:59789"/>
    </ligand>
</feature>
<feature type="binding site" evidence="1">
    <location>
        <begin position="301"/>
        <end position="303"/>
    </location>
    <ligand>
        <name>S-adenosyl-L-methionine</name>
        <dbReference type="ChEBI" id="CHEBI:59789"/>
    </ligand>
</feature>
<feature type="binding site" evidence="1">
    <location>
        <position position="306"/>
    </location>
    <ligand>
        <name>S-adenosyl-L-methionine</name>
        <dbReference type="ChEBI" id="CHEBI:59789"/>
    </ligand>
</feature>
<feature type="binding site" evidence="1">
    <location>
        <begin position="331"/>
        <end position="332"/>
    </location>
    <ligand>
        <name>S-adenosyl-L-methionine</name>
        <dbReference type="ChEBI" id="CHEBI:59789"/>
    </ligand>
</feature>
<feature type="binding site" evidence="1">
    <location>
        <position position="382"/>
    </location>
    <ligand>
        <name>S-adenosyl-L-methionine</name>
        <dbReference type="ChEBI" id="CHEBI:59789"/>
    </ligand>
</feature>
<feature type="binding site" evidence="1">
    <location>
        <position position="411"/>
    </location>
    <ligand>
        <name>S-adenosyl-L-methionine</name>
        <dbReference type="ChEBI" id="CHEBI:59789"/>
    </ligand>
</feature>
<feature type="modified residue" description="Phosphoserine" evidence="1">
    <location>
        <position position="128"/>
    </location>
</feature>
<keyword id="KW-0169">Cobalamin biosynthesis</keyword>
<keyword id="KW-0456">Lyase</keyword>
<keyword id="KW-0489">Methyltransferase</keyword>
<keyword id="KW-0511">Multifunctional enzyme</keyword>
<keyword id="KW-0520">NAD</keyword>
<keyword id="KW-0560">Oxidoreductase</keyword>
<keyword id="KW-0597">Phosphoprotein</keyword>
<keyword id="KW-0627">Porphyrin biosynthesis</keyword>
<keyword id="KW-0949">S-adenosyl-L-methionine</keyword>
<keyword id="KW-0808">Transferase</keyword>
<evidence type="ECO:0000255" key="1">
    <source>
        <dbReference type="HAMAP-Rule" id="MF_01646"/>
    </source>
</evidence>
<reference key="1">
    <citation type="journal article" date="2006" name="Mol. Microbiol.">
        <title>Role of pathogenicity island-associated integrases in the genome plasticity of uropathogenic Escherichia coli strain 536.</title>
        <authorList>
            <person name="Hochhut B."/>
            <person name="Wilde C."/>
            <person name="Balling G."/>
            <person name="Middendorf B."/>
            <person name="Dobrindt U."/>
            <person name="Brzuszkiewicz E."/>
            <person name="Gottschalk G."/>
            <person name="Carniel E."/>
            <person name="Hacker J."/>
        </authorList>
    </citation>
    <scope>NUCLEOTIDE SEQUENCE [LARGE SCALE GENOMIC DNA]</scope>
    <source>
        <strain>536 / UPEC</strain>
    </source>
</reference>
<name>CYSG_ECOL5</name>
<gene>
    <name evidence="1" type="primary">cysG</name>
    <name type="ordered locus">ECP_3459</name>
</gene>
<protein>
    <recommendedName>
        <fullName evidence="1">Siroheme synthase</fullName>
    </recommendedName>
    <domain>
        <recommendedName>
            <fullName evidence="1">Uroporphyrinogen-III C-methyltransferase</fullName>
            <shortName evidence="1">Urogen III methylase</shortName>
            <ecNumber evidence="1">2.1.1.107</ecNumber>
        </recommendedName>
        <alternativeName>
            <fullName evidence="1">SUMT</fullName>
        </alternativeName>
        <alternativeName>
            <fullName evidence="1">Uroporphyrinogen III methylase</fullName>
            <shortName evidence="1">UROM</shortName>
        </alternativeName>
    </domain>
    <domain>
        <recommendedName>
            <fullName evidence="1">Precorrin-2 dehydrogenase</fullName>
            <ecNumber evidence="1">1.3.1.76</ecNumber>
        </recommendedName>
    </domain>
    <domain>
        <recommendedName>
            <fullName evidence="1">Sirohydrochlorin ferrochelatase</fullName>
            <ecNumber evidence="1">4.99.1.4</ecNumber>
        </recommendedName>
    </domain>
</protein>
<comment type="function">
    <text evidence="1">Multifunctional enzyme that catalyzes the SAM-dependent methylations of uroporphyrinogen III at position C-2 and C-7 to form precorrin-2 via precorrin-1. Then it catalyzes the NAD-dependent ring dehydrogenation of precorrin-2 to yield sirohydrochlorin. Finally, it catalyzes the ferrochelation of sirohydrochlorin to yield siroheme.</text>
</comment>
<comment type="catalytic activity">
    <reaction evidence="1">
        <text>uroporphyrinogen III + 2 S-adenosyl-L-methionine = precorrin-2 + 2 S-adenosyl-L-homocysteine + H(+)</text>
        <dbReference type="Rhea" id="RHEA:32459"/>
        <dbReference type="ChEBI" id="CHEBI:15378"/>
        <dbReference type="ChEBI" id="CHEBI:57308"/>
        <dbReference type="ChEBI" id="CHEBI:57856"/>
        <dbReference type="ChEBI" id="CHEBI:58827"/>
        <dbReference type="ChEBI" id="CHEBI:59789"/>
        <dbReference type="EC" id="2.1.1.107"/>
    </reaction>
</comment>
<comment type="catalytic activity">
    <reaction evidence="1">
        <text>precorrin-2 + NAD(+) = sirohydrochlorin + NADH + 2 H(+)</text>
        <dbReference type="Rhea" id="RHEA:15613"/>
        <dbReference type="ChEBI" id="CHEBI:15378"/>
        <dbReference type="ChEBI" id="CHEBI:57540"/>
        <dbReference type="ChEBI" id="CHEBI:57945"/>
        <dbReference type="ChEBI" id="CHEBI:58351"/>
        <dbReference type="ChEBI" id="CHEBI:58827"/>
        <dbReference type="EC" id="1.3.1.76"/>
    </reaction>
</comment>
<comment type="catalytic activity">
    <reaction evidence="1">
        <text>siroheme + 2 H(+) = sirohydrochlorin + Fe(2+)</text>
        <dbReference type="Rhea" id="RHEA:24360"/>
        <dbReference type="ChEBI" id="CHEBI:15378"/>
        <dbReference type="ChEBI" id="CHEBI:29033"/>
        <dbReference type="ChEBI" id="CHEBI:58351"/>
        <dbReference type="ChEBI" id="CHEBI:60052"/>
        <dbReference type="EC" id="4.99.1.4"/>
    </reaction>
</comment>
<comment type="pathway">
    <text evidence="1">Cofactor biosynthesis; adenosylcobalamin biosynthesis; precorrin-2 from uroporphyrinogen III: step 1/1.</text>
</comment>
<comment type="pathway">
    <text evidence="1">Cofactor biosynthesis; adenosylcobalamin biosynthesis; sirohydrochlorin from precorrin-2: step 1/1.</text>
</comment>
<comment type="pathway">
    <text evidence="1">Porphyrin-containing compound metabolism; siroheme biosynthesis; precorrin-2 from uroporphyrinogen III: step 1/1.</text>
</comment>
<comment type="pathway">
    <text evidence="1">Porphyrin-containing compound metabolism; siroheme biosynthesis; siroheme from sirohydrochlorin: step 1/1.</text>
</comment>
<comment type="pathway">
    <text evidence="1">Porphyrin-containing compound metabolism; siroheme biosynthesis; sirohydrochlorin from precorrin-2: step 1/1.</text>
</comment>
<comment type="similarity">
    <text evidence="1">In the N-terminal section; belongs to the precorrin-2 dehydrogenase / sirohydrochlorin ferrochelatase family.</text>
</comment>
<comment type="similarity">
    <text evidence="1">In the C-terminal section; belongs to the precorrin methyltransferase family.</text>
</comment>
<proteinExistence type="inferred from homology"/>
<sequence>MDHLPIFCQLRDRDCLIVGGGDVAERKARLLLDAGARLTVNALAFIPQFTAWADAGMLTLVEGPFDESLLDTCWLAIAATDDDALNQRVSEAAESRRIFCNVVDAPKAASFIMPSIIDRSPLMVAVSSGGTSPVLARLLREKLESLLPLHLGQVAKYAGQLRGRVKQQFATMGERRRFWEKLFVNDRLAQSLANNDQKAITETTEQLINEPLDHRGEVVLVGAGPGDAGLLTLKGLQQIQQADVVVYDRLVSDDIMNLVRRDADRVFVGKRAGYHCVPQEEINQILLREAQKGKRVVRLKGGDPFIFGRGGEELETLCNAGIPFSVVPGITAASGCSAYSGIPLTHRDYAQSVRLITGHLKTGGELDWENLAAEKQTLVFYMGLNQAATIQQKLIEYGMPGEMPVAIVENGTAVTQRVIDGTLTQLGELAQQMNSPSLIIIGRVVGLRDKLNWFSNH</sequence>
<dbReference type="EC" id="2.1.1.107" evidence="1"/>
<dbReference type="EC" id="1.3.1.76" evidence="1"/>
<dbReference type="EC" id="4.99.1.4" evidence="1"/>
<dbReference type="EMBL" id="CP000247">
    <property type="protein sequence ID" value="ABG71437.1"/>
    <property type="molecule type" value="Genomic_DNA"/>
</dbReference>
<dbReference type="RefSeq" id="WP_000349876.1">
    <property type="nucleotide sequence ID" value="NC_008253.1"/>
</dbReference>
<dbReference type="SMR" id="Q0TC92"/>
<dbReference type="KEGG" id="ecp:ECP_3459"/>
<dbReference type="HOGENOM" id="CLU_011276_2_0_6"/>
<dbReference type="UniPathway" id="UPA00148">
    <property type="reaction ID" value="UER00211"/>
</dbReference>
<dbReference type="UniPathway" id="UPA00148">
    <property type="reaction ID" value="UER00222"/>
</dbReference>
<dbReference type="UniPathway" id="UPA00262">
    <property type="reaction ID" value="UER00211"/>
</dbReference>
<dbReference type="UniPathway" id="UPA00262">
    <property type="reaction ID" value="UER00222"/>
</dbReference>
<dbReference type="UniPathway" id="UPA00262">
    <property type="reaction ID" value="UER00376"/>
</dbReference>
<dbReference type="Proteomes" id="UP000009182">
    <property type="component" value="Chromosome"/>
</dbReference>
<dbReference type="GO" id="GO:0051287">
    <property type="term" value="F:NAD binding"/>
    <property type="evidence" value="ECO:0007669"/>
    <property type="project" value="InterPro"/>
</dbReference>
<dbReference type="GO" id="GO:0043115">
    <property type="term" value="F:precorrin-2 dehydrogenase activity"/>
    <property type="evidence" value="ECO:0007669"/>
    <property type="project" value="UniProtKB-UniRule"/>
</dbReference>
<dbReference type="GO" id="GO:0051266">
    <property type="term" value="F:sirohydrochlorin ferrochelatase activity"/>
    <property type="evidence" value="ECO:0007669"/>
    <property type="project" value="UniProtKB-EC"/>
</dbReference>
<dbReference type="GO" id="GO:0004851">
    <property type="term" value="F:uroporphyrin-III C-methyltransferase activity"/>
    <property type="evidence" value="ECO:0007669"/>
    <property type="project" value="UniProtKB-UniRule"/>
</dbReference>
<dbReference type="GO" id="GO:0009236">
    <property type="term" value="P:cobalamin biosynthetic process"/>
    <property type="evidence" value="ECO:0007669"/>
    <property type="project" value="UniProtKB-UniRule"/>
</dbReference>
<dbReference type="GO" id="GO:0032259">
    <property type="term" value="P:methylation"/>
    <property type="evidence" value="ECO:0007669"/>
    <property type="project" value="UniProtKB-KW"/>
</dbReference>
<dbReference type="GO" id="GO:0019354">
    <property type="term" value="P:siroheme biosynthetic process"/>
    <property type="evidence" value="ECO:0007669"/>
    <property type="project" value="UniProtKB-UniRule"/>
</dbReference>
<dbReference type="CDD" id="cd11642">
    <property type="entry name" value="SUMT"/>
    <property type="match status" value="1"/>
</dbReference>
<dbReference type="FunFam" id="1.10.8.210:FF:000001">
    <property type="entry name" value="Siroheme synthase"/>
    <property type="match status" value="1"/>
</dbReference>
<dbReference type="FunFam" id="3.30.160.110:FF:000001">
    <property type="entry name" value="Siroheme synthase"/>
    <property type="match status" value="1"/>
</dbReference>
<dbReference type="FunFam" id="3.30.950.10:FF:000001">
    <property type="entry name" value="Siroheme synthase"/>
    <property type="match status" value="1"/>
</dbReference>
<dbReference type="FunFam" id="3.40.1010.10:FF:000001">
    <property type="entry name" value="Siroheme synthase"/>
    <property type="match status" value="1"/>
</dbReference>
<dbReference type="FunFam" id="3.40.50.720:FF:000092">
    <property type="entry name" value="Siroheme synthase"/>
    <property type="match status" value="1"/>
</dbReference>
<dbReference type="Gene3D" id="3.40.1010.10">
    <property type="entry name" value="Cobalt-precorrin-4 Transmethylase, Domain 1"/>
    <property type="match status" value="1"/>
</dbReference>
<dbReference type="Gene3D" id="3.30.950.10">
    <property type="entry name" value="Methyltransferase, Cobalt-precorrin-4 Transmethylase, Domain 2"/>
    <property type="match status" value="1"/>
</dbReference>
<dbReference type="Gene3D" id="3.40.50.720">
    <property type="entry name" value="NAD(P)-binding Rossmann-like Domain"/>
    <property type="match status" value="1"/>
</dbReference>
<dbReference type="Gene3D" id="1.10.8.210">
    <property type="entry name" value="Sirohaem synthase, dimerisation domain"/>
    <property type="match status" value="1"/>
</dbReference>
<dbReference type="Gene3D" id="3.30.160.110">
    <property type="entry name" value="Siroheme synthase, domain 2"/>
    <property type="match status" value="1"/>
</dbReference>
<dbReference type="HAMAP" id="MF_01646">
    <property type="entry name" value="Siroheme_synth"/>
    <property type="match status" value="1"/>
</dbReference>
<dbReference type="InterPro" id="IPR000878">
    <property type="entry name" value="4pyrrol_Mease"/>
</dbReference>
<dbReference type="InterPro" id="IPR035996">
    <property type="entry name" value="4pyrrol_Methylase_sf"/>
</dbReference>
<dbReference type="InterPro" id="IPR014777">
    <property type="entry name" value="4pyrrole_Mease_sub1"/>
</dbReference>
<dbReference type="InterPro" id="IPR014776">
    <property type="entry name" value="4pyrrole_Mease_sub2"/>
</dbReference>
<dbReference type="InterPro" id="IPR006366">
    <property type="entry name" value="CobA/CysG_C"/>
</dbReference>
<dbReference type="InterPro" id="IPR036291">
    <property type="entry name" value="NAD(P)-bd_dom_sf"/>
</dbReference>
<dbReference type="InterPro" id="IPR050161">
    <property type="entry name" value="Siro_Cobalamin_biosynth"/>
</dbReference>
<dbReference type="InterPro" id="IPR037115">
    <property type="entry name" value="Sirohaem_synt_dimer_dom_sf"/>
</dbReference>
<dbReference type="InterPro" id="IPR012409">
    <property type="entry name" value="Sirohaem_synth"/>
</dbReference>
<dbReference type="InterPro" id="IPR028281">
    <property type="entry name" value="Sirohaem_synthase_central"/>
</dbReference>
<dbReference type="InterPro" id="IPR019478">
    <property type="entry name" value="Sirohaem_synthase_dimer_dom"/>
</dbReference>
<dbReference type="InterPro" id="IPR006367">
    <property type="entry name" value="Sirohaem_synthase_N"/>
</dbReference>
<dbReference type="InterPro" id="IPR003043">
    <property type="entry name" value="Uropor_MeTrfase_CS"/>
</dbReference>
<dbReference type="NCBIfam" id="TIGR01469">
    <property type="entry name" value="cobA_cysG_Cterm"/>
    <property type="match status" value="1"/>
</dbReference>
<dbReference type="NCBIfam" id="TIGR01470">
    <property type="entry name" value="cysG_Nterm"/>
    <property type="match status" value="1"/>
</dbReference>
<dbReference type="NCBIfam" id="NF004790">
    <property type="entry name" value="PRK06136.1"/>
    <property type="match status" value="1"/>
</dbReference>
<dbReference type="NCBIfam" id="NF007922">
    <property type="entry name" value="PRK10637.1"/>
    <property type="match status" value="1"/>
</dbReference>
<dbReference type="PANTHER" id="PTHR45790:SF1">
    <property type="entry name" value="SIROHEME SYNTHASE"/>
    <property type="match status" value="1"/>
</dbReference>
<dbReference type="PANTHER" id="PTHR45790">
    <property type="entry name" value="SIROHEME SYNTHASE-RELATED"/>
    <property type="match status" value="1"/>
</dbReference>
<dbReference type="Pfam" id="PF10414">
    <property type="entry name" value="CysG_dimeriser"/>
    <property type="match status" value="1"/>
</dbReference>
<dbReference type="Pfam" id="PF13241">
    <property type="entry name" value="NAD_binding_7"/>
    <property type="match status" value="1"/>
</dbReference>
<dbReference type="Pfam" id="PF14824">
    <property type="entry name" value="Sirohm_synth_M"/>
    <property type="match status" value="1"/>
</dbReference>
<dbReference type="Pfam" id="PF00590">
    <property type="entry name" value="TP_methylase"/>
    <property type="match status" value="1"/>
</dbReference>
<dbReference type="PIRSF" id="PIRSF036426">
    <property type="entry name" value="Sirohaem_synth"/>
    <property type="match status" value="1"/>
</dbReference>
<dbReference type="SUPFAM" id="SSF51735">
    <property type="entry name" value="NAD(P)-binding Rossmann-fold domains"/>
    <property type="match status" value="1"/>
</dbReference>
<dbReference type="SUPFAM" id="SSF75615">
    <property type="entry name" value="Siroheme synthase middle domains-like"/>
    <property type="match status" value="1"/>
</dbReference>
<dbReference type="SUPFAM" id="SSF53790">
    <property type="entry name" value="Tetrapyrrole methylase"/>
    <property type="match status" value="1"/>
</dbReference>
<dbReference type="PROSITE" id="PS00839">
    <property type="entry name" value="SUMT_1"/>
    <property type="match status" value="1"/>
</dbReference>
<dbReference type="PROSITE" id="PS00840">
    <property type="entry name" value="SUMT_2"/>
    <property type="match status" value="1"/>
</dbReference>
<accession>Q0TC92</accession>